<accession>Q9V0F7</accession>
<accession>G8ZH39</accession>
<evidence type="ECO:0000305" key="1"/>
<name>Y832_PYRAB</name>
<protein>
    <recommendedName>
        <fullName>UPF0128 protein PYRAB08320</fullName>
    </recommendedName>
</protein>
<organism>
    <name type="scientific">Pyrococcus abyssi (strain GE5 / Orsay)</name>
    <dbReference type="NCBI Taxonomy" id="272844"/>
    <lineage>
        <taxon>Archaea</taxon>
        <taxon>Methanobacteriati</taxon>
        <taxon>Methanobacteriota</taxon>
        <taxon>Thermococci</taxon>
        <taxon>Thermococcales</taxon>
        <taxon>Thermococcaceae</taxon>
        <taxon>Pyrococcus</taxon>
    </lineage>
</organism>
<sequence length="222" mass="26423">MMEGYYIIENPGVVPAERRFRMKDLKAWGYDLHLGTIEGERAYFVSKVGERREGEKYQVGGKEYYIEETQKDIPGNARLLARIVIERGNPYLEFWLEEEDTKFPLAKEDPRIILKRIWEKEKLNQLLKHVRAIGLTTDFYKDNVFIKSIPLPYEEYPPKVRRVLREVRDIHRDLTGFGRFVFQYFGEVEKAHNYRLHWTLPTLHLFDVDIANEVDKILGMLD</sequence>
<proteinExistence type="inferred from homology"/>
<feature type="chain" id="PRO_0000185226" description="UPF0128 protein PYRAB08320">
    <location>
        <begin position="1"/>
        <end position="222"/>
    </location>
</feature>
<dbReference type="EMBL" id="AJ248285">
    <property type="protein sequence ID" value="CAB49746.1"/>
    <property type="molecule type" value="Genomic_DNA"/>
</dbReference>
<dbReference type="EMBL" id="HE613800">
    <property type="protein sequence ID" value="CCE70234.1"/>
    <property type="molecule type" value="Genomic_DNA"/>
</dbReference>
<dbReference type="PIR" id="A75129">
    <property type="entry name" value="A75129"/>
</dbReference>
<dbReference type="RefSeq" id="WP_010867954.1">
    <property type="nucleotide sequence ID" value="NC_000868.1"/>
</dbReference>
<dbReference type="STRING" id="272844.PAB1806"/>
<dbReference type="KEGG" id="pab:PAB1806"/>
<dbReference type="PATRIC" id="fig|272844.11.peg.878"/>
<dbReference type="eggNOG" id="arCOG05084">
    <property type="taxonomic scope" value="Archaea"/>
</dbReference>
<dbReference type="HOGENOM" id="CLU_1243079_0_0_2"/>
<dbReference type="OrthoDB" id="84574at2157"/>
<dbReference type="PhylomeDB" id="Q9V0F7"/>
<dbReference type="Proteomes" id="UP000000810">
    <property type="component" value="Chromosome"/>
</dbReference>
<dbReference type="Proteomes" id="UP000009139">
    <property type="component" value="Chromosome"/>
</dbReference>
<dbReference type="HAMAP" id="MF_00264">
    <property type="entry name" value="UPF0128"/>
    <property type="match status" value="1"/>
</dbReference>
<dbReference type="InterPro" id="IPR005266">
    <property type="entry name" value="UPF0128"/>
</dbReference>
<dbReference type="NCBIfam" id="TIGR00703">
    <property type="entry name" value="TIGR00703 family protein"/>
    <property type="match status" value="1"/>
</dbReference>
<dbReference type="Pfam" id="PF03673">
    <property type="entry name" value="UPF0128"/>
    <property type="match status" value="1"/>
</dbReference>
<dbReference type="PIRSF" id="PIRSF016179">
    <property type="entry name" value="UCP016179"/>
    <property type="match status" value="1"/>
</dbReference>
<gene>
    <name type="ordered locus">PYRAB08320</name>
    <name type="ORF">PAB1806</name>
</gene>
<reference key="1">
    <citation type="journal article" date="2003" name="Mol. Microbiol.">
        <title>An integrated analysis of the genome of the hyperthermophilic archaeon Pyrococcus abyssi.</title>
        <authorList>
            <person name="Cohen G.N."/>
            <person name="Barbe V."/>
            <person name="Flament D."/>
            <person name="Galperin M."/>
            <person name="Heilig R."/>
            <person name="Lecompte O."/>
            <person name="Poch O."/>
            <person name="Prieur D."/>
            <person name="Querellou J."/>
            <person name="Ripp R."/>
            <person name="Thierry J.-C."/>
            <person name="Van der Oost J."/>
            <person name="Weissenbach J."/>
            <person name="Zivanovic Y."/>
            <person name="Forterre P."/>
        </authorList>
    </citation>
    <scope>NUCLEOTIDE SEQUENCE [LARGE SCALE GENOMIC DNA]</scope>
    <source>
        <strain>GE5 / Orsay</strain>
    </source>
</reference>
<reference key="2">
    <citation type="journal article" date="2012" name="Curr. Microbiol.">
        <title>Re-annotation of two hyperthermophilic archaea Pyrococcus abyssi GE5 and Pyrococcus furiosus DSM 3638.</title>
        <authorList>
            <person name="Gao J."/>
            <person name="Wang J."/>
        </authorList>
    </citation>
    <scope>GENOME REANNOTATION</scope>
    <source>
        <strain>GE5 / Orsay</strain>
    </source>
</reference>
<comment type="similarity">
    <text evidence="1">Belongs to the UPF0128 family.</text>
</comment>